<organism>
    <name type="scientific">Synechococcus sp. (strain CC9311)</name>
    <dbReference type="NCBI Taxonomy" id="64471"/>
    <lineage>
        <taxon>Bacteria</taxon>
        <taxon>Bacillati</taxon>
        <taxon>Cyanobacteriota</taxon>
        <taxon>Cyanophyceae</taxon>
        <taxon>Synechococcales</taxon>
        <taxon>Synechococcaceae</taxon>
        <taxon>Synechococcus</taxon>
    </lineage>
</organism>
<proteinExistence type="inferred from homology"/>
<keyword id="KW-0240">DNA-directed RNA polymerase</keyword>
<keyword id="KW-0460">Magnesium</keyword>
<keyword id="KW-0479">Metal-binding</keyword>
<keyword id="KW-0548">Nucleotidyltransferase</keyword>
<keyword id="KW-1185">Reference proteome</keyword>
<keyword id="KW-0804">Transcription</keyword>
<keyword id="KW-0808">Transferase</keyword>
<keyword id="KW-0862">Zinc</keyword>
<dbReference type="EC" id="2.7.7.6" evidence="1"/>
<dbReference type="EMBL" id="CP000435">
    <property type="protein sequence ID" value="ABI45531.1"/>
    <property type="molecule type" value="Genomic_DNA"/>
</dbReference>
<dbReference type="RefSeq" id="WP_011620264.1">
    <property type="nucleotide sequence ID" value="NC_008319.1"/>
</dbReference>
<dbReference type="SMR" id="Q0I7L8"/>
<dbReference type="STRING" id="64471.sync_2357"/>
<dbReference type="KEGG" id="syg:sync_2357"/>
<dbReference type="eggNOG" id="COG0086">
    <property type="taxonomic scope" value="Bacteria"/>
</dbReference>
<dbReference type="HOGENOM" id="CLU_030022_2_0_3"/>
<dbReference type="OrthoDB" id="9815296at2"/>
<dbReference type="Proteomes" id="UP000001961">
    <property type="component" value="Chromosome"/>
</dbReference>
<dbReference type="GO" id="GO:0000428">
    <property type="term" value="C:DNA-directed RNA polymerase complex"/>
    <property type="evidence" value="ECO:0007669"/>
    <property type="project" value="UniProtKB-KW"/>
</dbReference>
<dbReference type="GO" id="GO:0003677">
    <property type="term" value="F:DNA binding"/>
    <property type="evidence" value="ECO:0007669"/>
    <property type="project" value="UniProtKB-UniRule"/>
</dbReference>
<dbReference type="GO" id="GO:0003899">
    <property type="term" value="F:DNA-directed RNA polymerase activity"/>
    <property type="evidence" value="ECO:0007669"/>
    <property type="project" value="UniProtKB-UniRule"/>
</dbReference>
<dbReference type="GO" id="GO:0000287">
    <property type="term" value="F:magnesium ion binding"/>
    <property type="evidence" value="ECO:0007669"/>
    <property type="project" value="UniProtKB-UniRule"/>
</dbReference>
<dbReference type="GO" id="GO:0008270">
    <property type="term" value="F:zinc ion binding"/>
    <property type="evidence" value="ECO:0007669"/>
    <property type="project" value="UniProtKB-UniRule"/>
</dbReference>
<dbReference type="GO" id="GO:0006351">
    <property type="term" value="P:DNA-templated transcription"/>
    <property type="evidence" value="ECO:0007669"/>
    <property type="project" value="UniProtKB-UniRule"/>
</dbReference>
<dbReference type="Gene3D" id="1.10.40.90">
    <property type="match status" value="1"/>
</dbReference>
<dbReference type="Gene3D" id="2.40.40.20">
    <property type="match status" value="1"/>
</dbReference>
<dbReference type="Gene3D" id="4.10.860.120">
    <property type="entry name" value="RNA polymerase II, clamp domain"/>
    <property type="match status" value="1"/>
</dbReference>
<dbReference type="Gene3D" id="1.10.274.100">
    <property type="entry name" value="RNA polymerase Rpb1, domain 3"/>
    <property type="match status" value="1"/>
</dbReference>
<dbReference type="HAMAP" id="MF_01323">
    <property type="entry name" value="RNApol_bact_RpoC1"/>
    <property type="match status" value="1"/>
</dbReference>
<dbReference type="InterPro" id="IPR012755">
    <property type="entry name" value="DNA-dir_RpoC1_gamma"/>
</dbReference>
<dbReference type="InterPro" id="IPR045867">
    <property type="entry name" value="DNA-dir_RpoC_beta_prime"/>
</dbReference>
<dbReference type="InterPro" id="IPR000722">
    <property type="entry name" value="RNA_pol_asu"/>
</dbReference>
<dbReference type="InterPro" id="IPR006592">
    <property type="entry name" value="RNA_pol_N"/>
</dbReference>
<dbReference type="InterPro" id="IPR007080">
    <property type="entry name" value="RNA_pol_Rpb1_1"/>
</dbReference>
<dbReference type="InterPro" id="IPR007066">
    <property type="entry name" value="RNA_pol_Rpb1_3"/>
</dbReference>
<dbReference type="InterPro" id="IPR042102">
    <property type="entry name" value="RNA_pol_Rpb1_3_sf"/>
</dbReference>
<dbReference type="InterPro" id="IPR044893">
    <property type="entry name" value="RNA_pol_Rpb1_clamp_domain"/>
</dbReference>
<dbReference type="InterPro" id="IPR034678">
    <property type="entry name" value="RNApol_RpoC1"/>
</dbReference>
<dbReference type="NCBIfam" id="NF002729">
    <property type="entry name" value="PRK02625.1"/>
    <property type="match status" value="1"/>
</dbReference>
<dbReference type="NCBIfam" id="TIGR02387">
    <property type="entry name" value="rpoC1_cyan"/>
    <property type="match status" value="1"/>
</dbReference>
<dbReference type="PANTHER" id="PTHR19376">
    <property type="entry name" value="DNA-DIRECTED RNA POLYMERASE"/>
    <property type="match status" value="1"/>
</dbReference>
<dbReference type="PANTHER" id="PTHR19376:SF54">
    <property type="entry name" value="DNA-DIRECTED RNA POLYMERASE SUBUNIT BETA"/>
    <property type="match status" value="1"/>
</dbReference>
<dbReference type="Pfam" id="PF04997">
    <property type="entry name" value="RNA_pol_Rpb1_1"/>
    <property type="match status" value="1"/>
</dbReference>
<dbReference type="Pfam" id="PF00623">
    <property type="entry name" value="RNA_pol_Rpb1_2"/>
    <property type="match status" value="1"/>
</dbReference>
<dbReference type="Pfam" id="PF04983">
    <property type="entry name" value="RNA_pol_Rpb1_3"/>
    <property type="match status" value="1"/>
</dbReference>
<dbReference type="SMART" id="SM00663">
    <property type="entry name" value="RPOLA_N"/>
    <property type="match status" value="1"/>
</dbReference>
<dbReference type="SUPFAM" id="SSF64484">
    <property type="entry name" value="beta and beta-prime subunits of DNA dependent RNA-polymerase"/>
    <property type="match status" value="1"/>
</dbReference>
<evidence type="ECO:0000255" key="1">
    <source>
        <dbReference type="HAMAP-Rule" id="MF_01323"/>
    </source>
</evidence>
<name>RPOC1_SYNS3</name>
<reference key="1">
    <citation type="journal article" date="2006" name="Proc. Natl. Acad. Sci. U.S.A.">
        <title>Genome sequence of Synechococcus CC9311: insights into adaptation to a coastal environment.</title>
        <authorList>
            <person name="Palenik B."/>
            <person name="Ren Q."/>
            <person name="Dupont C.L."/>
            <person name="Myers G.S."/>
            <person name="Heidelberg J.F."/>
            <person name="Badger J.H."/>
            <person name="Madupu R."/>
            <person name="Nelson W.C."/>
            <person name="Brinkac L.M."/>
            <person name="Dodson R.J."/>
            <person name="Durkin A.S."/>
            <person name="Daugherty S.C."/>
            <person name="Sullivan S.A."/>
            <person name="Khouri H."/>
            <person name="Mohamoud Y."/>
            <person name="Halpin R."/>
            <person name="Paulsen I.T."/>
        </authorList>
    </citation>
    <scope>NUCLEOTIDE SEQUENCE [LARGE SCALE GENOMIC DNA]</scope>
    <source>
        <strain>CC9311</strain>
    </source>
</reference>
<accession>Q0I7L8</accession>
<protein>
    <recommendedName>
        <fullName evidence="1">DNA-directed RNA polymerase subunit gamma</fullName>
        <shortName evidence="1">RNAP subunit gamma</shortName>
        <ecNumber evidence="1">2.7.7.6</ecNumber>
    </recommendedName>
    <alternativeName>
        <fullName evidence="1">RNA polymerase subunit gamma</fullName>
    </alternativeName>
    <alternativeName>
        <fullName evidence="1">Transcriptase subunit gamma</fullName>
    </alternativeName>
</protein>
<sequence>MTNSNLRTENHFDYVKITLASPDRVMEWGQRTLPNGQVVGEVTKPETINYRTLKPEMDGLFCEKIFGPSKDWECHCGKYKRVRHRGIVCERCGVEVTESRVRRHRMGFIKLAAPVSHVWYLKGIPSYVAILLDMPLRDVEQIVYFNCYVVLDAGDHKDLKYKQLLTEDEWLEIEDEIYAEDSEIENEPVVGIGAEALKQLLEDLQLNAVAEQLREEIAGSKGQKRAKLIKRLRVIDNFIATNARPEWMVLDAIPVIPPDLRPMVQLDGGRFATSDLNDLYRRVINRNNRLARLQEILAPEIIVRNEKRMLQEAVDALIDNGRRGRTVVGANNRPLKSLSDIIEGKQGRFRQNLLGKRVDYSGRSVIVVGPKLKMHQCGLPKEMAIELFQPFVIHRLIRQNIVNNIKAAKKLIQRADDEVMQVLQEVIDGHPIMLNRAPTLHRLGIQAFEPKLVDGRAIQLHPLVCPAFNADFDGDQMAVHVPLAIEAQTEARMLMLASNNILSPATGDPIITPSQDMVLGSYYLTALQPQMHPIEFGDRSRTYSSLEDVIHAFEDNRITLHDWVWVRFNGEVEDEDEREEPITTETLSDGTRFEQWTYRRDRFDEDGALISRYILTTVGRVVMNHTIIDAVAAT</sequence>
<gene>
    <name evidence="1" type="primary">rpoC1</name>
    <name type="ordered locus">sync_2357</name>
</gene>
<feature type="chain" id="PRO_1000051996" description="DNA-directed RNA polymerase subunit gamma">
    <location>
        <begin position="1"/>
        <end position="634"/>
    </location>
</feature>
<feature type="binding site" evidence="1">
    <location>
        <position position="74"/>
    </location>
    <ligand>
        <name>Zn(2+)</name>
        <dbReference type="ChEBI" id="CHEBI:29105"/>
    </ligand>
</feature>
<feature type="binding site" evidence="1">
    <location>
        <position position="76"/>
    </location>
    <ligand>
        <name>Zn(2+)</name>
        <dbReference type="ChEBI" id="CHEBI:29105"/>
    </ligand>
</feature>
<feature type="binding site" evidence="1">
    <location>
        <position position="89"/>
    </location>
    <ligand>
        <name>Zn(2+)</name>
        <dbReference type="ChEBI" id="CHEBI:29105"/>
    </ligand>
</feature>
<feature type="binding site" evidence="1">
    <location>
        <position position="92"/>
    </location>
    <ligand>
        <name>Zn(2+)</name>
        <dbReference type="ChEBI" id="CHEBI:29105"/>
    </ligand>
</feature>
<feature type="binding site" evidence="1">
    <location>
        <position position="471"/>
    </location>
    <ligand>
        <name>Mg(2+)</name>
        <dbReference type="ChEBI" id="CHEBI:18420"/>
    </ligand>
</feature>
<feature type="binding site" evidence="1">
    <location>
        <position position="473"/>
    </location>
    <ligand>
        <name>Mg(2+)</name>
        <dbReference type="ChEBI" id="CHEBI:18420"/>
    </ligand>
</feature>
<feature type="binding site" evidence="1">
    <location>
        <position position="475"/>
    </location>
    <ligand>
        <name>Mg(2+)</name>
        <dbReference type="ChEBI" id="CHEBI:18420"/>
    </ligand>
</feature>
<comment type="function">
    <text evidence="1">DNA-dependent RNA polymerase catalyzes the transcription of DNA into RNA using the four ribonucleoside triphosphates as substrates.</text>
</comment>
<comment type="catalytic activity">
    <reaction evidence="1">
        <text>RNA(n) + a ribonucleoside 5'-triphosphate = RNA(n+1) + diphosphate</text>
        <dbReference type="Rhea" id="RHEA:21248"/>
        <dbReference type="Rhea" id="RHEA-COMP:14527"/>
        <dbReference type="Rhea" id="RHEA-COMP:17342"/>
        <dbReference type="ChEBI" id="CHEBI:33019"/>
        <dbReference type="ChEBI" id="CHEBI:61557"/>
        <dbReference type="ChEBI" id="CHEBI:140395"/>
        <dbReference type="EC" id="2.7.7.6"/>
    </reaction>
</comment>
<comment type="cofactor">
    <cofactor evidence="1">
        <name>Mg(2+)</name>
        <dbReference type="ChEBI" id="CHEBI:18420"/>
    </cofactor>
    <text evidence="1">Binds 1 Mg(2+) ion per subunit.</text>
</comment>
<comment type="cofactor">
    <cofactor evidence="1">
        <name>Zn(2+)</name>
        <dbReference type="ChEBI" id="CHEBI:29105"/>
    </cofactor>
    <text evidence="1">Binds 1 Zn(2+) ion per subunit.</text>
</comment>
<comment type="subunit">
    <text evidence="1">In cyanobacteria the RNAP catalytic core is composed of 2 alpha, 1 beta, 1 beta', 1 gamma and 1 omega subunit. When a sigma factor is associated with the core the holoenzyme is formed, which can initiate transcription.</text>
</comment>
<comment type="similarity">
    <text evidence="1">Belongs to the RNA polymerase beta' chain family. RpoC1 subfamily.</text>
</comment>